<sequence length="157" mass="17856">MPSVESFELDHTIVKAPYVRHCGVHNVGSDGIVNKFDIRFCQPNKQAMKPDVIHTLEHLLAFNLRKYIDRYPHFDIIDISPMGCQTGYYLVVSGTPTVREIIDLLELTLKDAVQITEIPAANETQCGQAKLHDLEGAKRLMNFWLSQDKDELEKVFG</sequence>
<reference key="1">
    <citation type="submission" date="2008-10" db="EMBL/GenBank/DDBJ databases">
        <title>Genome sequence of Bacillus cereus AH820.</title>
        <authorList>
            <person name="Dodson R.J."/>
            <person name="Durkin A.S."/>
            <person name="Rosovitz M.J."/>
            <person name="Rasko D.A."/>
            <person name="Hoffmaster A."/>
            <person name="Ravel J."/>
            <person name="Sutton G."/>
        </authorList>
    </citation>
    <scope>NUCLEOTIDE SEQUENCE [LARGE SCALE GENOMIC DNA]</scope>
    <source>
        <strain>AH820</strain>
    </source>
</reference>
<proteinExistence type="inferred from homology"/>
<gene>
    <name evidence="1" type="primary">luxS</name>
    <name type="ordered locus">BCAH820_4911</name>
</gene>
<protein>
    <recommendedName>
        <fullName evidence="1">S-ribosylhomocysteine lyase</fullName>
        <ecNumber evidence="1">4.4.1.21</ecNumber>
    </recommendedName>
    <alternativeName>
        <fullName evidence="1">AI-2 synthesis protein</fullName>
    </alternativeName>
    <alternativeName>
        <fullName evidence="1">Autoinducer-2 production protein LuxS</fullName>
    </alternativeName>
</protein>
<evidence type="ECO:0000255" key="1">
    <source>
        <dbReference type="HAMAP-Rule" id="MF_00091"/>
    </source>
</evidence>
<feature type="chain" id="PRO_1000117212" description="S-ribosylhomocysteine lyase">
    <location>
        <begin position="1"/>
        <end position="157"/>
    </location>
</feature>
<feature type="binding site" evidence="1">
    <location>
        <position position="54"/>
    </location>
    <ligand>
        <name>Fe cation</name>
        <dbReference type="ChEBI" id="CHEBI:24875"/>
    </ligand>
</feature>
<feature type="binding site" evidence="1">
    <location>
        <position position="58"/>
    </location>
    <ligand>
        <name>Fe cation</name>
        <dbReference type="ChEBI" id="CHEBI:24875"/>
    </ligand>
</feature>
<feature type="binding site" evidence="1">
    <location>
        <position position="126"/>
    </location>
    <ligand>
        <name>Fe cation</name>
        <dbReference type="ChEBI" id="CHEBI:24875"/>
    </ligand>
</feature>
<dbReference type="EC" id="4.4.1.21" evidence="1"/>
<dbReference type="EMBL" id="CP001283">
    <property type="protein sequence ID" value="ACK90374.1"/>
    <property type="molecule type" value="Genomic_DNA"/>
</dbReference>
<dbReference type="RefSeq" id="WP_001141369.1">
    <property type="nucleotide sequence ID" value="NC_011773.1"/>
</dbReference>
<dbReference type="SMR" id="B7JT57"/>
<dbReference type="GeneID" id="93006297"/>
<dbReference type="KEGG" id="bcu:BCAH820_4911"/>
<dbReference type="HOGENOM" id="CLU_107531_2_0_9"/>
<dbReference type="Proteomes" id="UP000001363">
    <property type="component" value="Chromosome"/>
</dbReference>
<dbReference type="GO" id="GO:0005506">
    <property type="term" value="F:iron ion binding"/>
    <property type="evidence" value="ECO:0007669"/>
    <property type="project" value="InterPro"/>
</dbReference>
<dbReference type="GO" id="GO:0043768">
    <property type="term" value="F:S-ribosylhomocysteine lyase activity"/>
    <property type="evidence" value="ECO:0007669"/>
    <property type="project" value="UniProtKB-UniRule"/>
</dbReference>
<dbReference type="GO" id="GO:0009372">
    <property type="term" value="P:quorum sensing"/>
    <property type="evidence" value="ECO:0007669"/>
    <property type="project" value="UniProtKB-UniRule"/>
</dbReference>
<dbReference type="Gene3D" id="3.30.1360.80">
    <property type="entry name" value="S-ribosylhomocysteinase (LuxS)"/>
    <property type="match status" value="1"/>
</dbReference>
<dbReference type="HAMAP" id="MF_00091">
    <property type="entry name" value="LuxS"/>
    <property type="match status" value="1"/>
</dbReference>
<dbReference type="InterPro" id="IPR037005">
    <property type="entry name" value="LuxS_sf"/>
</dbReference>
<dbReference type="InterPro" id="IPR011249">
    <property type="entry name" value="Metalloenz_LuxS/M16"/>
</dbReference>
<dbReference type="InterPro" id="IPR003815">
    <property type="entry name" value="S-ribosylhomocysteinase"/>
</dbReference>
<dbReference type="NCBIfam" id="NF002603">
    <property type="entry name" value="PRK02260.1-3"/>
    <property type="match status" value="1"/>
</dbReference>
<dbReference type="PANTHER" id="PTHR35799">
    <property type="entry name" value="S-RIBOSYLHOMOCYSTEINE LYASE"/>
    <property type="match status" value="1"/>
</dbReference>
<dbReference type="PANTHER" id="PTHR35799:SF1">
    <property type="entry name" value="S-RIBOSYLHOMOCYSTEINE LYASE"/>
    <property type="match status" value="1"/>
</dbReference>
<dbReference type="Pfam" id="PF02664">
    <property type="entry name" value="LuxS"/>
    <property type="match status" value="1"/>
</dbReference>
<dbReference type="PIRSF" id="PIRSF006160">
    <property type="entry name" value="AI2"/>
    <property type="match status" value="1"/>
</dbReference>
<dbReference type="PRINTS" id="PR01487">
    <property type="entry name" value="LUXSPROTEIN"/>
</dbReference>
<dbReference type="SUPFAM" id="SSF63411">
    <property type="entry name" value="LuxS/MPP-like metallohydrolase"/>
    <property type="match status" value="1"/>
</dbReference>
<comment type="function">
    <text evidence="1">Involved in the synthesis of autoinducer 2 (AI-2) which is secreted by bacteria and is used to communicate both the cell density and the metabolic potential of the environment. The regulation of gene expression in response to changes in cell density is called quorum sensing. Catalyzes the transformation of S-ribosylhomocysteine (RHC) to homocysteine (HC) and 4,5-dihydroxy-2,3-pentadione (DPD).</text>
</comment>
<comment type="catalytic activity">
    <reaction evidence="1">
        <text>S-(5-deoxy-D-ribos-5-yl)-L-homocysteine = (S)-4,5-dihydroxypentane-2,3-dione + L-homocysteine</text>
        <dbReference type="Rhea" id="RHEA:17753"/>
        <dbReference type="ChEBI" id="CHEBI:29484"/>
        <dbReference type="ChEBI" id="CHEBI:58195"/>
        <dbReference type="ChEBI" id="CHEBI:58199"/>
        <dbReference type="EC" id="4.4.1.21"/>
    </reaction>
</comment>
<comment type="cofactor">
    <cofactor evidence="1">
        <name>Fe cation</name>
        <dbReference type="ChEBI" id="CHEBI:24875"/>
    </cofactor>
    <text evidence="1">Binds 1 Fe cation per subunit.</text>
</comment>
<comment type="subunit">
    <text evidence="1">Homodimer.</text>
</comment>
<comment type="similarity">
    <text evidence="1">Belongs to the LuxS family.</text>
</comment>
<keyword id="KW-0071">Autoinducer synthesis</keyword>
<keyword id="KW-0408">Iron</keyword>
<keyword id="KW-0456">Lyase</keyword>
<keyword id="KW-0479">Metal-binding</keyword>
<keyword id="KW-0673">Quorum sensing</keyword>
<organism>
    <name type="scientific">Bacillus cereus (strain AH820)</name>
    <dbReference type="NCBI Taxonomy" id="405535"/>
    <lineage>
        <taxon>Bacteria</taxon>
        <taxon>Bacillati</taxon>
        <taxon>Bacillota</taxon>
        <taxon>Bacilli</taxon>
        <taxon>Bacillales</taxon>
        <taxon>Bacillaceae</taxon>
        <taxon>Bacillus</taxon>
        <taxon>Bacillus cereus group</taxon>
    </lineage>
</organism>
<accession>B7JT57</accession>
<name>LUXS_BACC0</name>